<comment type="function">
    <text evidence="4">Component of the microsomal membrane bound fatty acid elongation system, which produces the 26-carbon very long-chain fatty acids (VLCFA) from palmitate. Catalyzes the reduction of the 3-ketoacyl-CoA intermediate that is formed in each cycle of fatty acid elongation. VLCFAs serve as precursors for ceramide and sphingolipids.</text>
</comment>
<comment type="catalytic activity">
    <reaction evidence="4">
        <text>a very-long-chain (3R)-3-hydroxyacyl-CoA + NADP(+) = a very-long-chain 3-oxoacyl-CoA + NADPH + H(+)</text>
        <dbReference type="Rhea" id="RHEA:48680"/>
        <dbReference type="ChEBI" id="CHEBI:15378"/>
        <dbReference type="ChEBI" id="CHEBI:57783"/>
        <dbReference type="ChEBI" id="CHEBI:58349"/>
        <dbReference type="ChEBI" id="CHEBI:85440"/>
        <dbReference type="ChEBI" id="CHEBI:90725"/>
        <dbReference type="EC" id="1.1.1.330"/>
    </reaction>
</comment>
<comment type="pathway">
    <text evidence="3">Lipid metabolism; fatty acid biosynthesis.</text>
</comment>
<comment type="subcellular location">
    <subcellularLocation>
        <location evidence="4">Endoplasmic reticulum membrane</location>
        <topology evidence="4">Single-pass membrane protein</topology>
    </subcellularLocation>
</comment>
<comment type="similarity">
    <text evidence="4">Belongs to the short-chain dehydrogenases/reductases (SDR) family.</text>
</comment>
<keyword id="KW-0256">Endoplasmic reticulum</keyword>
<keyword id="KW-0275">Fatty acid biosynthesis</keyword>
<keyword id="KW-0276">Fatty acid metabolism</keyword>
<keyword id="KW-0444">Lipid biosynthesis</keyword>
<keyword id="KW-0443">Lipid metabolism</keyword>
<keyword id="KW-0472">Membrane</keyword>
<keyword id="KW-0521">NADP</keyword>
<keyword id="KW-0560">Oxidoreductase</keyword>
<keyword id="KW-1185">Reference proteome</keyword>
<keyword id="KW-0812">Transmembrane</keyword>
<keyword id="KW-1133">Transmembrane helix</keyword>
<proteinExistence type="inferred from homology"/>
<name>MKAR_PYRO7</name>
<accession>A4QTE3</accession>
<accession>G4N4E5</accession>
<dbReference type="EC" id="1.1.1.330" evidence="4"/>
<dbReference type="EMBL" id="CM001233">
    <property type="protein sequence ID" value="EHA52813.1"/>
    <property type="molecule type" value="Genomic_DNA"/>
</dbReference>
<dbReference type="RefSeq" id="XP_003712620.1">
    <property type="nucleotide sequence ID" value="XM_003712572.1"/>
</dbReference>
<dbReference type="SMR" id="A4QTE3"/>
<dbReference type="FunCoup" id="A4QTE3">
    <property type="interactions" value="691"/>
</dbReference>
<dbReference type="STRING" id="242507.A4QTE3"/>
<dbReference type="EnsemblFungi" id="MGG_05096T0">
    <property type="protein sequence ID" value="MGG_05096T0"/>
    <property type="gene ID" value="MGG_05096"/>
</dbReference>
<dbReference type="GeneID" id="2675553"/>
<dbReference type="KEGG" id="mgr:MGG_05096"/>
<dbReference type="VEuPathDB" id="FungiDB:MGG_05096"/>
<dbReference type="eggNOG" id="KOG1014">
    <property type="taxonomic scope" value="Eukaryota"/>
</dbReference>
<dbReference type="HOGENOM" id="CLU_010194_38_0_1"/>
<dbReference type="InParanoid" id="A4QTE3"/>
<dbReference type="OMA" id="LVAPGMM"/>
<dbReference type="OrthoDB" id="5545019at2759"/>
<dbReference type="UniPathway" id="UPA00094"/>
<dbReference type="PHI-base" id="PHI:8927"/>
<dbReference type="Proteomes" id="UP000009058">
    <property type="component" value="Chromosome 3"/>
</dbReference>
<dbReference type="GO" id="GO:0005789">
    <property type="term" value="C:endoplasmic reticulum membrane"/>
    <property type="evidence" value="ECO:0007669"/>
    <property type="project" value="UniProtKB-SubCell"/>
</dbReference>
<dbReference type="GO" id="GO:0045703">
    <property type="term" value="F:ketoreductase activity"/>
    <property type="evidence" value="ECO:0007669"/>
    <property type="project" value="UniProtKB-UniRule"/>
</dbReference>
<dbReference type="GO" id="GO:0141040">
    <property type="term" value="F:very-long-chain 3-oxoacyl-CoA reductase activity"/>
    <property type="evidence" value="ECO:0007669"/>
    <property type="project" value="UniProtKB-EC"/>
</dbReference>
<dbReference type="GO" id="GO:0030497">
    <property type="term" value="P:fatty acid elongation"/>
    <property type="evidence" value="ECO:0007669"/>
    <property type="project" value="UniProtKB-UniRule"/>
</dbReference>
<dbReference type="GO" id="GO:0030148">
    <property type="term" value="P:sphingolipid biosynthetic process"/>
    <property type="evidence" value="ECO:0007669"/>
    <property type="project" value="EnsemblFungi"/>
</dbReference>
<dbReference type="GO" id="GO:0042761">
    <property type="term" value="P:very long-chain fatty acid biosynthetic process"/>
    <property type="evidence" value="ECO:0007669"/>
    <property type="project" value="EnsemblFungi"/>
</dbReference>
<dbReference type="CDD" id="cd05356">
    <property type="entry name" value="17beta-HSD1_like_SDR_c"/>
    <property type="match status" value="1"/>
</dbReference>
<dbReference type="FunFam" id="3.40.50.720:FF:000317">
    <property type="entry name" value="Very-long-chain 3-oxoacyl-CoA reductase"/>
    <property type="match status" value="1"/>
</dbReference>
<dbReference type="Gene3D" id="3.40.50.720">
    <property type="entry name" value="NAD(P)-binding Rossmann-like Domain"/>
    <property type="match status" value="1"/>
</dbReference>
<dbReference type="HAMAP" id="MF_03107">
    <property type="entry name" value="3_ketoreductase"/>
    <property type="match status" value="1"/>
</dbReference>
<dbReference type="InterPro" id="IPR027533">
    <property type="entry name" value="3_ketoreductase_fungal"/>
</dbReference>
<dbReference type="InterPro" id="IPR036291">
    <property type="entry name" value="NAD(P)-bd_dom_sf"/>
</dbReference>
<dbReference type="InterPro" id="IPR020904">
    <property type="entry name" value="Sc_DH/Rdtase_CS"/>
</dbReference>
<dbReference type="InterPro" id="IPR002347">
    <property type="entry name" value="SDR_fam"/>
</dbReference>
<dbReference type="PANTHER" id="PTHR43086:SF2">
    <property type="entry name" value="HYDROXYSTEROID DEHYDROGENASE-LIKE PROTEIN 1"/>
    <property type="match status" value="1"/>
</dbReference>
<dbReference type="PANTHER" id="PTHR43086">
    <property type="entry name" value="VERY-LONG-CHAIN 3-OXOOACYL-COA REDUCTASE"/>
    <property type="match status" value="1"/>
</dbReference>
<dbReference type="Pfam" id="PF00106">
    <property type="entry name" value="adh_short"/>
    <property type="match status" value="1"/>
</dbReference>
<dbReference type="PIRSF" id="PIRSF000126">
    <property type="entry name" value="11-beta-HSD1"/>
    <property type="match status" value="1"/>
</dbReference>
<dbReference type="PRINTS" id="PR00081">
    <property type="entry name" value="GDHRDH"/>
</dbReference>
<dbReference type="SUPFAM" id="SSF51735">
    <property type="entry name" value="NAD(P)-binding Rossmann-fold domains"/>
    <property type="match status" value="1"/>
</dbReference>
<dbReference type="PROSITE" id="PS00061">
    <property type="entry name" value="ADH_SHORT"/>
    <property type="match status" value="1"/>
</dbReference>
<organism>
    <name type="scientific">Pyricularia oryzae (strain 70-15 / ATCC MYA-4617 / FGSC 8958)</name>
    <name type="common">Rice blast fungus</name>
    <name type="synonym">Magnaporthe oryzae</name>
    <dbReference type="NCBI Taxonomy" id="242507"/>
    <lineage>
        <taxon>Eukaryota</taxon>
        <taxon>Fungi</taxon>
        <taxon>Dikarya</taxon>
        <taxon>Ascomycota</taxon>
        <taxon>Pezizomycotina</taxon>
        <taxon>Sordariomycetes</taxon>
        <taxon>Sordariomycetidae</taxon>
        <taxon>Magnaporthales</taxon>
        <taxon>Pyriculariaceae</taxon>
        <taxon>Pyricularia</taxon>
    </lineage>
</organism>
<feature type="chain" id="PRO_0000357313" description="Very-long-chain 3-oxoacyl-CoA reductase">
    <location>
        <begin position="1"/>
        <end position="331"/>
    </location>
</feature>
<feature type="transmembrane region" description="Helical" evidence="4">
    <location>
        <begin position="15"/>
        <end position="35"/>
    </location>
</feature>
<feature type="active site" description="Proton donor" evidence="2">
    <location>
        <position position="209"/>
    </location>
</feature>
<feature type="active site" description="Lowers pKa of active site Tyr" evidence="2">
    <location>
        <position position="213"/>
    </location>
</feature>
<feature type="binding site" evidence="1">
    <location>
        <position position="60"/>
    </location>
    <ligand>
        <name>NADP(+)</name>
        <dbReference type="ChEBI" id="CHEBI:58349"/>
    </ligand>
</feature>
<feature type="binding site" evidence="1">
    <location>
        <position position="115"/>
    </location>
    <ligand>
        <name>NADP(+)</name>
        <dbReference type="ChEBI" id="CHEBI:58349"/>
    </ligand>
</feature>
<feature type="binding site" evidence="1">
    <location>
        <position position="123"/>
    </location>
    <ligand>
        <name>NADP(+)</name>
        <dbReference type="ChEBI" id="CHEBI:58349"/>
    </ligand>
</feature>
<feature type="binding site" evidence="2">
    <location>
        <position position="142"/>
    </location>
    <ligand>
        <name>NADP(+)</name>
        <dbReference type="ChEBI" id="CHEBI:58349"/>
    </ligand>
</feature>
<feature type="binding site" evidence="2">
    <location>
        <position position="209"/>
    </location>
    <ligand>
        <name>NADP(+)</name>
        <dbReference type="ChEBI" id="CHEBI:58349"/>
    </ligand>
</feature>
<feature type="binding site" evidence="2">
    <location>
        <position position="213"/>
    </location>
    <ligand>
        <name>NADP(+)</name>
        <dbReference type="ChEBI" id="CHEBI:58349"/>
    </ligand>
</feature>
<feature type="binding site" evidence="2">
    <location>
        <position position="242"/>
    </location>
    <ligand>
        <name>NADP(+)</name>
        <dbReference type="ChEBI" id="CHEBI:58349"/>
    </ligand>
</feature>
<feature type="binding site" evidence="1">
    <location>
        <position position="244"/>
    </location>
    <ligand>
        <name>NADP(+)</name>
        <dbReference type="ChEBI" id="CHEBI:58349"/>
    </ligand>
</feature>
<protein>
    <recommendedName>
        <fullName evidence="4">Very-long-chain 3-oxoacyl-CoA reductase</fullName>
        <ecNumber evidence="4">1.1.1.330</ecNumber>
    </recommendedName>
    <alternativeName>
        <fullName evidence="4">3-ketoacyl-CoA reductase</fullName>
        <shortName evidence="4">3-ketoreductase</shortName>
        <shortName evidence="4">KAR</shortName>
    </alternativeName>
    <alternativeName>
        <fullName evidence="4">Microsomal beta-keto-reductase</fullName>
    </alternativeName>
</protein>
<evidence type="ECO:0000250" key="1">
    <source>
        <dbReference type="UniProtKB" id="L0E2Z4"/>
    </source>
</evidence>
<evidence type="ECO:0000250" key="2">
    <source>
        <dbReference type="UniProtKB" id="O93868"/>
    </source>
</evidence>
<evidence type="ECO:0000250" key="3">
    <source>
        <dbReference type="UniProtKB" id="P38286"/>
    </source>
</evidence>
<evidence type="ECO:0000255" key="4">
    <source>
        <dbReference type="HAMAP-Rule" id="MF_03107"/>
    </source>
</evidence>
<sequence length="331" mass="36134">MDSLTTALGSVPQVVQWALAGVGALYISAKVLSYLHLVLNLFILGGTNLSKYGKKGSWAVVTGASDGLGKEFASQLAAKGFNIVLVSRTESKLKELAKELEAKNGSLKTKVLAMDYEQDNDDDYEKLGQLLSGLDVAILINNVGRSHSIPVPFLQTPREELQNIVTINCLGTLKTTQVVAPIMAQRKRGLILTMGSFGGWMPTPFLATYSGSKAFLQHWSTSLAEELRSSGVDVHLVLSYLIVSAMSKVRRPSAMVPTPRAFVRSALGKIGCATQNVAYTYTPWWSHAIMQWWVENTIGIGSKIGLQVNLKMHKDIRTRALKKAEREAKKA</sequence>
<gene>
    <name type="ORF">MGG_05096</name>
</gene>
<reference key="1">
    <citation type="journal article" date="2005" name="Nature">
        <title>The genome sequence of the rice blast fungus Magnaporthe grisea.</title>
        <authorList>
            <person name="Dean R.A."/>
            <person name="Talbot N.J."/>
            <person name="Ebbole D.J."/>
            <person name="Farman M.L."/>
            <person name="Mitchell T.K."/>
            <person name="Orbach M.J."/>
            <person name="Thon M.R."/>
            <person name="Kulkarni R."/>
            <person name="Xu J.-R."/>
            <person name="Pan H."/>
            <person name="Read N.D."/>
            <person name="Lee Y.-H."/>
            <person name="Carbone I."/>
            <person name="Brown D."/>
            <person name="Oh Y.Y."/>
            <person name="Donofrio N."/>
            <person name="Jeong J.S."/>
            <person name="Soanes D.M."/>
            <person name="Djonovic S."/>
            <person name="Kolomiets E."/>
            <person name="Rehmeyer C."/>
            <person name="Li W."/>
            <person name="Harding M."/>
            <person name="Kim S."/>
            <person name="Lebrun M.-H."/>
            <person name="Bohnert H."/>
            <person name="Coughlan S."/>
            <person name="Butler J."/>
            <person name="Calvo S.E."/>
            <person name="Ma L.-J."/>
            <person name="Nicol R."/>
            <person name="Purcell S."/>
            <person name="Nusbaum C."/>
            <person name="Galagan J.E."/>
            <person name="Birren B.W."/>
        </authorList>
    </citation>
    <scope>NUCLEOTIDE SEQUENCE [LARGE SCALE GENOMIC DNA]</scope>
    <source>
        <strain>70-15 / ATCC MYA-4617 / FGSC 8958</strain>
    </source>
</reference>